<proteinExistence type="inferred from homology"/>
<feature type="chain" id="PRO_0000120650" description="NAD kinase">
    <location>
        <begin position="1"/>
        <end position="257"/>
    </location>
</feature>
<feature type="active site" description="Proton acceptor" evidence="1">
    <location>
        <position position="46"/>
    </location>
</feature>
<feature type="binding site" evidence="1">
    <location>
        <begin position="46"/>
        <end position="47"/>
    </location>
    <ligand>
        <name>NAD(+)</name>
        <dbReference type="ChEBI" id="CHEBI:57540"/>
    </ligand>
</feature>
<feature type="binding site" evidence="1">
    <location>
        <begin position="116"/>
        <end position="117"/>
    </location>
    <ligand>
        <name>NAD(+)</name>
        <dbReference type="ChEBI" id="CHEBI:57540"/>
    </ligand>
</feature>
<feature type="binding site" evidence="1">
    <location>
        <position position="146"/>
    </location>
    <ligand>
        <name>NAD(+)</name>
        <dbReference type="ChEBI" id="CHEBI:57540"/>
    </ligand>
</feature>
<feature type="binding site" evidence="1">
    <location>
        <position position="154"/>
    </location>
    <ligand>
        <name>NAD(+)</name>
        <dbReference type="ChEBI" id="CHEBI:57540"/>
    </ligand>
</feature>
<feature type="binding site" evidence="1">
    <location>
        <begin position="157"/>
        <end position="162"/>
    </location>
    <ligand>
        <name>NAD(+)</name>
        <dbReference type="ChEBI" id="CHEBI:57540"/>
    </ligand>
</feature>
<organism>
    <name type="scientific">Mesorhizobium japonicum (strain LMG 29417 / CECT 9101 / MAFF 303099)</name>
    <name type="common">Mesorhizobium loti (strain MAFF 303099)</name>
    <dbReference type="NCBI Taxonomy" id="266835"/>
    <lineage>
        <taxon>Bacteria</taxon>
        <taxon>Pseudomonadati</taxon>
        <taxon>Pseudomonadota</taxon>
        <taxon>Alphaproteobacteria</taxon>
        <taxon>Hyphomicrobiales</taxon>
        <taxon>Phyllobacteriaceae</taxon>
        <taxon>Mesorhizobium</taxon>
    </lineage>
</organism>
<gene>
    <name evidence="1" type="primary">nadK</name>
    <name type="ordered locus">mll0225</name>
</gene>
<comment type="function">
    <text evidence="1">Involved in the regulation of the intracellular balance of NAD and NADP, and is a key enzyme in the biosynthesis of NADP. Catalyzes specifically the phosphorylation on 2'-hydroxyl of the adenosine moiety of NAD to yield NADP.</text>
</comment>
<comment type="catalytic activity">
    <reaction evidence="1">
        <text>NAD(+) + ATP = ADP + NADP(+) + H(+)</text>
        <dbReference type="Rhea" id="RHEA:18629"/>
        <dbReference type="ChEBI" id="CHEBI:15378"/>
        <dbReference type="ChEBI" id="CHEBI:30616"/>
        <dbReference type="ChEBI" id="CHEBI:57540"/>
        <dbReference type="ChEBI" id="CHEBI:58349"/>
        <dbReference type="ChEBI" id="CHEBI:456216"/>
        <dbReference type="EC" id="2.7.1.23"/>
    </reaction>
</comment>
<comment type="cofactor">
    <cofactor evidence="1">
        <name>a divalent metal cation</name>
        <dbReference type="ChEBI" id="CHEBI:60240"/>
    </cofactor>
</comment>
<comment type="subcellular location">
    <subcellularLocation>
        <location evidence="1">Cytoplasm</location>
    </subcellularLocation>
</comment>
<comment type="similarity">
    <text evidence="1">Belongs to the NAD kinase family.</text>
</comment>
<comment type="sequence caution" evidence="2">
    <conflict type="erroneous initiation">
        <sequence resource="EMBL-CDS" id="BAB47855"/>
    </conflict>
    <text>Extended N-terminus.</text>
</comment>
<reference key="1">
    <citation type="journal article" date="2000" name="DNA Res.">
        <title>Complete genome structure of the nitrogen-fixing symbiotic bacterium Mesorhizobium loti.</title>
        <authorList>
            <person name="Kaneko T."/>
            <person name="Nakamura Y."/>
            <person name="Sato S."/>
            <person name="Asamizu E."/>
            <person name="Kato T."/>
            <person name="Sasamoto S."/>
            <person name="Watanabe A."/>
            <person name="Idesawa K."/>
            <person name="Ishikawa A."/>
            <person name="Kawashima K."/>
            <person name="Kimura T."/>
            <person name="Kishida Y."/>
            <person name="Kiyokawa C."/>
            <person name="Kohara M."/>
            <person name="Matsumoto M."/>
            <person name="Matsuno A."/>
            <person name="Mochizuki Y."/>
            <person name="Nakayama S."/>
            <person name="Nakazaki N."/>
            <person name="Shimpo S."/>
            <person name="Sugimoto M."/>
            <person name="Takeuchi C."/>
            <person name="Yamada M."/>
            <person name="Tabata S."/>
        </authorList>
    </citation>
    <scope>NUCLEOTIDE SEQUENCE [LARGE SCALE GENOMIC DNA]</scope>
    <source>
        <strain>LMG 29417 / CECT 9101 / MAFF 303099</strain>
    </source>
</reference>
<accession>Q98NA6</accession>
<dbReference type="EC" id="2.7.1.23" evidence="1"/>
<dbReference type="EMBL" id="BA000012">
    <property type="protein sequence ID" value="BAB47855.1"/>
    <property type="status" value="ALT_INIT"/>
    <property type="molecule type" value="Genomic_DNA"/>
</dbReference>
<dbReference type="RefSeq" id="WP_044547489.1">
    <property type="nucleotide sequence ID" value="NC_002678.2"/>
</dbReference>
<dbReference type="SMR" id="Q98NA6"/>
<dbReference type="KEGG" id="mlo:mll0225"/>
<dbReference type="PATRIC" id="fig|266835.9.peg.174"/>
<dbReference type="eggNOG" id="COG0061">
    <property type="taxonomic scope" value="Bacteria"/>
</dbReference>
<dbReference type="HOGENOM" id="CLU_073319_0_0_5"/>
<dbReference type="Proteomes" id="UP000000552">
    <property type="component" value="Chromosome"/>
</dbReference>
<dbReference type="GO" id="GO:0005737">
    <property type="term" value="C:cytoplasm"/>
    <property type="evidence" value="ECO:0007669"/>
    <property type="project" value="UniProtKB-SubCell"/>
</dbReference>
<dbReference type="GO" id="GO:0005524">
    <property type="term" value="F:ATP binding"/>
    <property type="evidence" value="ECO:0007669"/>
    <property type="project" value="UniProtKB-KW"/>
</dbReference>
<dbReference type="GO" id="GO:0046872">
    <property type="term" value="F:metal ion binding"/>
    <property type="evidence" value="ECO:0007669"/>
    <property type="project" value="UniProtKB-UniRule"/>
</dbReference>
<dbReference type="GO" id="GO:0051287">
    <property type="term" value="F:NAD binding"/>
    <property type="evidence" value="ECO:0007669"/>
    <property type="project" value="UniProtKB-ARBA"/>
</dbReference>
<dbReference type="GO" id="GO:0003951">
    <property type="term" value="F:NAD+ kinase activity"/>
    <property type="evidence" value="ECO:0007669"/>
    <property type="project" value="UniProtKB-UniRule"/>
</dbReference>
<dbReference type="GO" id="GO:0019674">
    <property type="term" value="P:NAD metabolic process"/>
    <property type="evidence" value="ECO:0007669"/>
    <property type="project" value="InterPro"/>
</dbReference>
<dbReference type="GO" id="GO:0006741">
    <property type="term" value="P:NADP biosynthetic process"/>
    <property type="evidence" value="ECO:0007669"/>
    <property type="project" value="UniProtKB-UniRule"/>
</dbReference>
<dbReference type="Gene3D" id="3.40.50.10330">
    <property type="entry name" value="Probable inorganic polyphosphate/atp-NAD kinase, domain 1"/>
    <property type="match status" value="1"/>
</dbReference>
<dbReference type="Gene3D" id="2.60.200.30">
    <property type="entry name" value="Probable inorganic polyphosphate/atp-NAD kinase, domain 2"/>
    <property type="match status" value="1"/>
</dbReference>
<dbReference type="HAMAP" id="MF_00361">
    <property type="entry name" value="NAD_kinase"/>
    <property type="match status" value="1"/>
</dbReference>
<dbReference type="InterPro" id="IPR017438">
    <property type="entry name" value="ATP-NAD_kinase_N"/>
</dbReference>
<dbReference type="InterPro" id="IPR017437">
    <property type="entry name" value="ATP-NAD_kinase_PpnK-typ_C"/>
</dbReference>
<dbReference type="InterPro" id="IPR016064">
    <property type="entry name" value="NAD/diacylglycerol_kinase_sf"/>
</dbReference>
<dbReference type="InterPro" id="IPR002504">
    <property type="entry name" value="NADK"/>
</dbReference>
<dbReference type="NCBIfam" id="NF003406">
    <property type="entry name" value="PRK04761.1"/>
    <property type="match status" value="1"/>
</dbReference>
<dbReference type="PANTHER" id="PTHR20275">
    <property type="entry name" value="NAD KINASE"/>
    <property type="match status" value="1"/>
</dbReference>
<dbReference type="PANTHER" id="PTHR20275:SF0">
    <property type="entry name" value="NAD KINASE"/>
    <property type="match status" value="1"/>
</dbReference>
<dbReference type="Pfam" id="PF20143">
    <property type="entry name" value="NAD_kinase_C"/>
    <property type="match status" value="1"/>
</dbReference>
<dbReference type="SUPFAM" id="SSF111331">
    <property type="entry name" value="NAD kinase/diacylglycerol kinase-like"/>
    <property type="match status" value="1"/>
</dbReference>
<name>NADK_RHILO</name>
<evidence type="ECO:0000255" key="1">
    <source>
        <dbReference type="HAMAP-Rule" id="MF_00361"/>
    </source>
</evidence>
<evidence type="ECO:0000305" key="2"/>
<sequence length="257" mass="27670">MSTAANSIAFVSSDTADAKAALESLSARYGQCSVAEAVVVVALGGDGFLLQTLRDTMGTGKKVYGMNRGTIGFLMNEYRSGGLTERIAAAVAETIRPLEMLAVTSEGETVSALAINEVALWRQSYQTAKIRISVDDQIRLEELSCDGVMIATPAGSTAYNLSAHGPILPLDAPLLALTPVSPFRPRRWRGALLSNKATVRFDILEPEKRPVNAAADHTEVKAVTSVTVRESPTATATLLFDPNHSWNERILAEQFRY</sequence>
<protein>
    <recommendedName>
        <fullName evidence="1">NAD kinase</fullName>
        <ecNumber evidence="1">2.7.1.23</ecNumber>
    </recommendedName>
    <alternativeName>
        <fullName evidence="1">ATP-dependent NAD kinase</fullName>
    </alternativeName>
</protein>
<keyword id="KW-0067">ATP-binding</keyword>
<keyword id="KW-0963">Cytoplasm</keyword>
<keyword id="KW-0418">Kinase</keyword>
<keyword id="KW-0520">NAD</keyword>
<keyword id="KW-0521">NADP</keyword>
<keyword id="KW-0547">Nucleotide-binding</keyword>
<keyword id="KW-0808">Transferase</keyword>